<name>RBL_DUNTE</name>
<dbReference type="EC" id="4.1.1.39" evidence="1"/>
<dbReference type="EMBL" id="AY882012">
    <property type="protein sequence ID" value="AAX76831.1"/>
    <property type="molecule type" value="Genomic_DNA"/>
</dbReference>
<dbReference type="SMR" id="Q2TGZ2"/>
<dbReference type="GO" id="GO:0009507">
    <property type="term" value="C:chloroplast"/>
    <property type="evidence" value="ECO:0007669"/>
    <property type="project" value="UniProtKB-SubCell"/>
</dbReference>
<dbReference type="GO" id="GO:0000287">
    <property type="term" value="F:magnesium ion binding"/>
    <property type="evidence" value="ECO:0007669"/>
    <property type="project" value="UniProtKB-UniRule"/>
</dbReference>
<dbReference type="GO" id="GO:0004497">
    <property type="term" value="F:monooxygenase activity"/>
    <property type="evidence" value="ECO:0007669"/>
    <property type="project" value="UniProtKB-KW"/>
</dbReference>
<dbReference type="GO" id="GO:0016984">
    <property type="term" value="F:ribulose-bisphosphate carboxylase activity"/>
    <property type="evidence" value="ECO:0007669"/>
    <property type="project" value="UniProtKB-UniRule"/>
</dbReference>
<dbReference type="GO" id="GO:0009853">
    <property type="term" value="P:photorespiration"/>
    <property type="evidence" value="ECO:0007669"/>
    <property type="project" value="UniProtKB-KW"/>
</dbReference>
<dbReference type="GO" id="GO:0019253">
    <property type="term" value="P:reductive pentose-phosphate cycle"/>
    <property type="evidence" value="ECO:0007669"/>
    <property type="project" value="UniProtKB-UniRule"/>
</dbReference>
<dbReference type="CDD" id="cd08212">
    <property type="entry name" value="RuBisCO_large_I"/>
    <property type="match status" value="1"/>
</dbReference>
<dbReference type="FunFam" id="3.20.20.110:FF:000001">
    <property type="entry name" value="Ribulose bisphosphate carboxylase large chain"/>
    <property type="match status" value="1"/>
</dbReference>
<dbReference type="Gene3D" id="3.20.20.110">
    <property type="entry name" value="Ribulose bisphosphate carboxylase, large subunit, C-terminal domain"/>
    <property type="match status" value="1"/>
</dbReference>
<dbReference type="Gene3D" id="3.30.70.150">
    <property type="entry name" value="RuBisCO large subunit, N-terminal domain"/>
    <property type="match status" value="1"/>
</dbReference>
<dbReference type="HAMAP" id="MF_01338">
    <property type="entry name" value="RuBisCO_L_type1"/>
    <property type="match status" value="1"/>
</dbReference>
<dbReference type="InterPro" id="IPR033966">
    <property type="entry name" value="RuBisCO"/>
</dbReference>
<dbReference type="InterPro" id="IPR020878">
    <property type="entry name" value="RuBisCo_large_chain_AS"/>
</dbReference>
<dbReference type="InterPro" id="IPR000685">
    <property type="entry name" value="RuBisCO_lsu_C"/>
</dbReference>
<dbReference type="InterPro" id="IPR036376">
    <property type="entry name" value="RuBisCO_lsu_C_sf"/>
</dbReference>
<dbReference type="InterPro" id="IPR017443">
    <property type="entry name" value="RuBisCO_lsu_fd_N"/>
</dbReference>
<dbReference type="InterPro" id="IPR036422">
    <property type="entry name" value="RuBisCO_lsu_N_sf"/>
</dbReference>
<dbReference type="InterPro" id="IPR020888">
    <property type="entry name" value="RuBisCO_lsuI"/>
</dbReference>
<dbReference type="NCBIfam" id="NF003252">
    <property type="entry name" value="PRK04208.1"/>
    <property type="match status" value="1"/>
</dbReference>
<dbReference type="PANTHER" id="PTHR42704">
    <property type="entry name" value="RIBULOSE BISPHOSPHATE CARBOXYLASE"/>
    <property type="match status" value="1"/>
</dbReference>
<dbReference type="PANTHER" id="PTHR42704:SF17">
    <property type="entry name" value="RIBULOSE BISPHOSPHATE CARBOXYLASE LARGE CHAIN"/>
    <property type="match status" value="1"/>
</dbReference>
<dbReference type="Pfam" id="PF00016">
    <property type="entry name" value="RuBisCO_large"/>
    <property type="match status" value="1"/>
</dbReference>
<dbReference type="Pfam" id="PF02788">
    <property type="entry name" value="RuBisCO_large_N"/>
    <property type="match status" value="1"/>
</dbReference>
<dbReference type="SFLD" id="SFLDG01052">
    <property type="entry name" value="RuBisCO"/>
    <property type="match status" value="1"/>
</dbReference>
<dbReference type="SFLD" id="SFLDS00014">
    <property type="entry name" value="RuBisCO"/>
    <property type="match status" value="1"/>
</dbReference>
<dbReference type="SFLD" id="SFLDG00301">
    <property type="entry name" value="RuBisCO-like_proteins"/>
    <property type="match status" value="1"/>
</dbReference>
<dbReference type="SUPFAM" id="SSF51649">
    <property type="entry name" value="RuBisCo, C-terminal domain"/>
    <property type="match status" value="1"/>
</dbReference>
<dbReference type="SUPFAM" id="SSF54966">
    <property type="entry name" value="RuBisCO, large subunit, small (N-terminal) domain"/>
    <property type="match status" value="1"/>
</dbReference>
<dbReference type="PROSITE" id="PS00157">
    <property type="entry name" value="RUBISCO_LARGE"/>
    <property type="match status" value="1"/>
</dbReference>
<protein>
    <recommendedName>
        <fullName evidence="1">Ribulose bisphosphate carboxylase large chain</fullName>
        <shortName evidence="1">RuBisCO large subunit</shortName>
        <ecNumber evidence="1">4.1.1.39</ecNumber>
    </recommendedName>
</protein>
<proteinExistence type="inferred from homology"/>
<accession>Q2TGZ2</accession>
<keyword id="KW-0007">Acetylation</keyword>
<keyword id="KW-0113">Calvin cycle</keyword>
<keyword id="KW-0120">Carbon dioxide fixation</keyword>
<keyword id="KW-0150">Chloroplast</keyword>
<keyword id="KW-0456">Lyase</keyword>
<keyword id="KW-0460">Magnesium</keyword>
<keyword id="KW-0479">Metal-binding</keyword>
<keyword id="KW-0488">Methylation</keyword>
<keyword id="KW-0503">Monooxygenase</keyword>
<keyword id="KW-0560">Oxidoreductase</keyword>
<keyword id="KW-0601">Photorespiration</keyword>
<keyword id="KW-0602">Photosynthesis</keyword>
<keyword id="KW-0934">Plastid</keyword>
<organism>
    <name type="scientific">Dunaliella tertiolecta</name>
    <name type="common">Green alga</name>
    <dbReference type="NCBI Taxonomy" id="3047"/>
    <lineage>
        <taxon>Eukaryota</taxon>
        <taxon>Viridiplantae</taxon>
        <taxon>Chlorophyta</taxon>
        <taxon>core chlorophytes</taxon>
        <taxon>Chlorophyceae</taxon>
        <taxon>CS clade</taxon>
        <taxon>Chlamydomonadales</taxon>
        <taxon>Dunaliellaceae</taxon>
        <taxon>Dunaliella</taxon>
    </lineage>
</organism>
<comment type="function">
    <text evidence="1">RuBisCO catalyzes two reactions: the carboxylation of D-ribulose 1,5-bisphosphate, the primary event in carbon dioxide fixation, as well as the oxidative fragmentation of the pentose substrate in the photorespiration process. Both reactions occur simultaneously and in competition at the same active site.</text>
</comment>
<comment type="catalytic activity">
    <reaction evidence="1">
        <text>2 (2R)-3-phosphoglycerate + 2 H(+) = D-ribulose 1,5-bisphosphate + CO2 + H2O</text>
        <dbReference type="Rhea" id="RHEA:23124"/>
        <dbReference type="ChEBI" id="CHEBI:15377"/>
        <dbReference type="ChEBI" id="CHEBI:15378"/>
        <dbReference type="ChEBI" id="CHEBI:16526"/>
        <dbReference type="ChEBI" id="CHEBI:57870"/>
        <dbReference type="ChEBI" id="CHEBI:58272"/>
        <dbReference type="EC" id="4.1.1.39"/>
    </reaction>
</comment>
<comment type="catalytic activity">
    <reaction evidence="1">
        <text>D-ribulose 1,5-bisphosphate + O2 = 2-phosphoglycolate + (2R)-3-phosphoglycerate + 2 H(+)</text>
        <dbReference type="Rhea" id="RHEA:36631"/>
        <dbReference type="ChEBI" id="CHEBI:15378"/>
        <dbReference type="ChEBI" id="CHEBI:15379"/>
        <dbReference type="ChEBI" id="CHEBI:57870"/>
        <dbReference type="ChEBI" id="CHEBI:58033"/>
        <dbReference type="ChEBI" id="CHEBI:58272"/>
    </reaction>
</comment>
<comment type="cofactor">
    <cofactor evidence="1">
        <name>Mg(2+)</name>
        <dbReference type="ChEBI" id="CHEBI:18420"/>
    </cofactor>
    <text evidence="1">Binds 1 Mg(2+) ion per subunit.</text>
</comment>
<comment type="subunit">
    <text evidence="1">Heterohexadecamer of 8 large chains and 8 small chains.</text>
</comment>
<comment type="subcellular location">
    <subcellularLocation>
        <location>Plastid</location>
        <location>Chloroplast</location>
    </subcellularLocation>
</comment>
<comment type="miscellaneous">
    <text evidence="1">The basic functional RuBisCO is composed of a large chain homodimer in a 'head-to-tail' conformation. In form I RuBisCO this homodimer is arranged in a barrel-like tetramer with the small subunits forming a tetrameric 'cap' on each end of the 'barrel'.</text>
</comment>
<comment type="similarity">
    <text evidence="1">Belongs to the RuBisCO large chain family. Type I subfamily.</text>
</comment>
<feature type="propeptide" id="PRO_0000299997" evidence="1">
    <location>
        <begin position="1"/>
        <end position="2"/>
    </location>
</feature>
<feature type="chain" id="PRO_0000299998" description="Ribulose bisphosphate carboxylase large chain">
    <location>
        <begin position="3"/>
        <end position="475"/>
    </location>
</feature>
<feature type="active site" description="Proton acceptor" evidence="1">
    <location>
        <position position="175"/>
    </location>
</feature>
<feature type="active site" description="Proton acceptor" evidence="1">
    <location>
        <position position="294"/>
    </location>
</feature>
<feature type="binding site" description="in homodimeric partner" evidence="1">
    <location>
        <position position="123"/>
    </location>
    <ligand>
        <name>substrate</name>
    </ligand>
</feature>
<feature type="binding site" evidence="1">
    <location>
        <position position="173"/>
    </location>
    <ligand>
        <name>substrate</name>
    </ligand>
</feature>
<feature type="binding site" evidence="1">
    <location>
        <position position="177"/>
    </location>
    <ligand>
        <name>substrate</name>
    </ligand>
</feature>
<feature type="binding site" description="via carbamate group" evidence="1">
    <location>
        <position position="201"/>
    </location>
    <ligand>
        <name>Mg(2+)</name>
        <dbReference type="ChEBI" id="CHEBI:18420"/>
    </ligand>
</feature>
<feature type="binding site" evidence="1">
    <location>
        <position position="203"/>
    </location>
    <ligand>
        <name>Mg(2+)</name>
        <dbReference type="ChEBI" id="CHEBI:18420"/>
    </ligand>
</feature>
<feature type="binding site" evidence="1">
    <location>
        <position position="204"/>
    </location>
    <ligand>
        <name>Mg(2+)</name>
        <dbReference type="ChEBI" id="CHEBI:18420"/>
    </ligand>
</feature>
<feature type="binding site" evidence="1">
    <location>
        <position position="295"/>
    </location>
    <ligand>
        <name>substrate</name>
    </ligand>
</feature>
<feature type="binding site" evidence="1">
    <location>
        <position position="327"/>
    </location>
    <ligand>
        <name>substrate</name>
    </ligand>
</feature>
<feature type="binding site" evidence="1">
    <location>
        <position position="379"/>
    </location>
    <ligand>
        <name>substrate</name>
    </ligand>
</feature>
<feature type="site" description="Transition state stabilizer" evidence="1">
    <location>
        <position position="334"/>
    </location>
</feature>
<feature type="modified residue" description="N-acetylproline" evidence="1">
    <location>
        <position position="3"/>
    </location>
</feature>
<feature type="modified residue" description="N6,N6,N6-trimethyllysine" evidence="1">
    <location>
        <position position="14"/>
    </location>
</feature>
<feature type="modified residue" description="N6-carboxylysine" evidence="1">
    <location>
        <position position="201"/>
    </location>
</feature>
<sequence length="475" mass="52542">MVPQTETKTGAGFKAGVKDYRLTYYTPDYVVSETDILAAFRMTPQPGVPPEECDAAVAAESSTGTWTTVWTDGLTSLDKYKGRCYDLEPVPGEENQYIAYVAYPIDLFEEGSVTNLFTSIVGNVFGFKALRALRLEDLRISPAYVKTFVGPPHGIQVERDKLNKYGRGLLGCTIKPKLGLSAKNYGRAVYECLRGGLDFTKDDENVNSQPFMRWRDRFLFVAEAIYKSQAETGEIKGHYLNATAGTAEGMLQRAQCAKELGVPIIMHDYLTGGFTANTSLAHYCRDHGLLLHIHRAMHAVIDRQRNHGIHFRVLAKTLRMSGGDHLHSGTVVGKLEGEREVTLGFVDLMRDNFVEKDRSRGIYFTQDWCSMPGVMPVASGGIHVWHMPALVEIFGDDACLQFGGGTLGHPWGNAPGAVANRVALEACTQARNEGRDLAREGGNVIRSACKWSPELAAACEVWKEIKFEFDTIDKL</sequence>
<reference key="1">
    <citation type="journal article" date="2005" name="J. Appl. Phycol.">
        <title>Isolation and characterization of components of the Dunaliella tertiolecta chloroplast genome.</title>
        <authorList>
            <person name="Walker T.L."/>
            <person name="Black D."/>
            <person name="Becker D.K."/>
            <person name="Dale J.L."/>
            <person name="Collet C."/>
        </authorList>
    </citation>
    <scope>NUCLEOTIDE SEQUENCE [GENOMIC DNA]</scope>
    <source>
        <strain>CS-175</strain>
    </source>
</reference>
<geneLocation type="chloroplast"/>
<evidence type="ECO:0000255" key="1">
    <source>
        <dbReference type="HAMAP-Rule" id="MF_01338"/>
    </source>
</evidence>
<gene>
    <name evidence="1" type="primary">rbcL</name>
</gene>